<sequence length="311" mass="36024">MIKKEIIILCGPTASGKSYLGHELAKAYGCEIINIDSMQVYREIPIITASPIQIYNTGIHYHLYNFLSITEDFSVIKYLKLASEKIREITARGKIPILIGGTGLYINLLVFGYNNIPDISQDVRVQVRNLHNEIGNIELWNKLEKLDPIAATKINHCDTQRLIRAYEVLMHTGKSIFSFHTAQKERILSDFNFKIIFLNPERKFLYKTCDERLDKIFKDKAIDEIALIKKQFTPKEYANLKAVGIKEIIAYLDGNLTLNDALNVAQMRTRQYAKRQVTWFTHQIQDKTILEYSTQEEFEQILRNLLFTLKS</sequence>
<proteinExistence type="inferred from homology"/>
<organism>
    <name type="scientific">Rickettsia typhi (strain ATCC VR-144 / Wilmington)</name>
    <dbReference type="NCBI Taxonomy" id="257363"/>
    <lineage>
        <taxon>Bacteria</taxon>
        <taxon>Pseudomonadati</taxon>
        <taxon>Pseudomonadota</taxon>
        <taxon>Alphaproteobacteria</taxon>
        <taxon>Rickettsiales</taxon>
        <taxon>Rickettsiaceae</taxon>
        <taxon>Rickettsieae</taxon>
        <taxon>Rickettsia</taxon>
        <taxon>typhus group</taxon>
    </lineage>
</organism>
<gene>
    <name evidence="1" type="primary">miaA</name>
    <name type="ordered locus">RT0495</name>
</gene>
<reference key="1">
    <citation type="journal article" date="2004" name="J. Bacteriol.">
        <title>Complete genome sequence of Rickettsia typhi and comparison with sequences of other Rickettsiae.</title>
        <authorList>
            <person name="McLeod M.P."/>
            <person name="Qin X."/>
            <person name="Karpathy S.E."/>
            <person name="Gioia J."/>
            <person name="Highlander S.K."/>
            <person name="Fox G.E."/>
            <person name="McNeill T.Z."/>
            <person name="Jiang H."/>
            <person name="Muzny D."/>
            <person name="Jacob L.S."/>
            <person name="Hawes A.C."/>
            <person name="Sodergren E."/>
            <person name="Gill R."/>
            <person name="Hume J."/>
            <person name="Morgan M."/>
            <person name="Fan G."/>
            <person name="Amin A.G."/>
            <person name="Gibbs R.A."/>
            <person name="Hong C."/>
            <person name="Yu X.-J."/>
            <person name="Walker D.H."/>
            <person name="Weinstock G.M."/>
        </authorList>
    </citation>
    <scope>NUCLEOTIDE SEQUENCE [LARGE SCALE GENOMIC DNA]</scope>
    <source>
        <strain>ATCC VR-144 / Wilmington</strain>
    </source>
</reference>
<protein>
    <recommendedName>
        <fullName evidence="1">tRNA dimethylallyltransferase</fullName>
        <ecNumber evidence="1">2.5.1.75</ecNumber>
    </recommendedName>
    <alternativeName>
        <fullName evidence="1">Dimethylallyl diphosphate:tRNA dimethylallyltransferase</fullName>
        <shortName evidence="1">DMAPP:tRNA dimethylallyltransferase</shortName>
        <shortName evidence="1">DMATase</shortName>
    </alternativeName>
    <alternativeName>
        <fullName evidence="1">Isopentenyl-diphosphate:tRNA isopentenyltransferase</fullName>
        <shortName evidence="1">IPP transferase</shortName>
        <shortName evidence="1">IPPT</shortName>
        <shortName evidence="1">IPTase</shortName>
    </alternativeName>
</protein>
<comment type="function">
    <text evidence="1">Catalyzes the transfer of a dimethylallyl group onto the adenine at position 37 in tRNAs that read codons beginning with uridine, leading to the formation of N6-(dimethylallyl)adenosine (i(6)A).</text>
</comment>
<comment type="catalytic activity">
    <reaction evidence="1">
        <text>adenosine(37) in tRNA + dimethylallyl diphosphate = N(6)-dimethylallyladenosine(37) in tRNA + diphosphate</text>
        <dbReference type="Rhea" id="RHEA:26482"/>
        <dbReference type="Rhea" id="RHEA-COMP:10162"/>
        <dbReference type="Rhea" id="RHEA-COMP:10375"/>
        <dbReference type="ChEBI" id="CHEBI:33019"/>
        <dbReference type="ChEBI" id="CHEBI:57623"/>
        <dbReference type="ChEBI" id="CHEBI:74411"/>
        <dbReference type="ChEBI" id="CHEBI:74415"/>
        <dbReference type="EC" id="2.5.1.75"/>
    </reaction>
</comment>
<comment type="cofactor">
    <cofactor evidence="1">
        <name>Mg(2+)</name>
        <dbReference type="ChEBI" id="CHEBI:18420"/>
    </cofactor>
</comment>
<comment type="subunit">
    <text evidence="1">Monomer.</text>
</comment>
<comment type="similarity">
    <text evidence="1">Belongs to the IPP transferase family.</text>
</comment>
<evidence type="ECO:0000255" key="1">
    <source>
        <dbReference type="HAMAP-Rule" id="MF_00185"/>
    </source>
</evidence>
<keyword id="KW-0067">ATP-binding</keyword>
<keyword id="KW-0460">Magnesium</keyword>
<keyword id="KW-0547">Nucleotide-binding</keyword>
<keyword id="KW-0808">Transferase</keyword>
<keyword id="KW-0819">tRNA processing</keyword>
<accession>Q68WM5</accession>
<name>MIAA_RICTY</name>
<feature type="chain" id="PRO_0000163967" description="tRNA dimethylallyltransferase">
    <location>
        <begin position="1"/>
        <end position="311"/>
    </location>
</feature>
<feature type="region of interest" description="Interaction with substrate tRNA" evidence="1">
    <location>
        <begin position="36"/>
        <end position="39"/>
    </location>
</feature>
<feature type="region of interest" description="Interaction with substrate tRNA" evidence="1">
    <location>
        <begin position="160"/>
        <end position="164"/>
    </location>
</feature>
<feature type="binding site" evidence="1">
    <location>
        <begin position="11"/>
        <end position="18"/>
    </location>
    <ligand>
        <name>ATP</name>
        <dbReference type="ChEBI" id="CHEBI:30616"/>
    </ligand>
</feature>
<feature type="binding site" evidence="1">
    <location>
        <begin position="13"/>
        <end position="18"/>
    </location>
    <ligand>
        <name>substrate</name>
    </ligand>
</feature>
<feature type="site" description="Interaction with substrate tRNA" evidence="1">
    <location>
        <position position="102"/>
    </location>
</feature>
<feature type="site" description="Interaction with substrate tRNA" evidence="1">
    <location>
        <position position="124"/>
    </location>
</feature>
<dbReference type="EC" id="2.5.1.75" evidence="1"/>
<dbReference type="EMBL" id="AE017197">
    <property type="protein sequence ID" value="AAU03967.1"/>
    <property type="molecule type" value="Genomic_DNA"/>
</dbReference>
<dbReference type="RefSeq" id="WP_011190949.1">
    <property type="nucleotide sequence ID" value="NC_006142.1"/>
</dbReference>
<dbReference type="SMR" id="Q68WM5"/>
<dbReference type="KEGG" id="rty:RT0495"/>
<dbReference type="eggNOG" id="COG0324">
    <property type="taxonomic scope" value="Bacteria"/>
</dbReference>
<dbReference type="HOGENOM" id="CLU_032616_0_1_5"/>
<dbReference type="OrthoDB" id="9776390at2"/>
<dbReference type="Proteomes" id="UP000000604">
    <property type="component" value="Chromosome"/>
</dbReference>
<dbReference type="GO" id="GO:0005524">
    <property type="term" value="F:ATP binding"/>
    <property type="evidence" value="ECO:0007669"/>
    <property type="project" value="UniProtKB-UniRule"/>
</dbReference>
<dbReference type="GO" id="GO:0052381">
    <property type="term" value="F:tRNA dimethylallyltransferase activity"/>
    <property type="evidence" value="ECO:0007669"/>
    <property type="project" value="UniProtKB-UniRule"/>
</dbReference>
<dbReference type="GO" id="GO:0006400">
    <property type="term" value="P:tRNA modification"/>
    <property type="evidence" value="ECO:0007669"/>
    <property type="project" value="TreeGrafter"/>
</dbReference>
<dbReference type="Gene3D" id="1.10.20.140">
    <property type="match status" value="1"/>
</dbReference>
<dbReference type="Gene3D" id="3.40.50.300">
    <property type="entry name" value="P-loop containing nucleotide triphosphate hydrolases"/>
    <property type="match status" value="1"/>
</dbReference>
<dbReference type="HAMAP" id="MF_00185">
    <property type="entry name" value="IPP_trans"/>
    <property type="match status" value="1"/>
</dbReference>
<dbReference type="InterPro" id="IPR039657">
    <property type="entry name" value="Dimethylallyltransferase"/>
</dbReference>
<dbReference type="InterPro" id="IPR018022">
    <property type="entry name" value="IPT"/>
</dbReference>
<dbReference type="InterPro" id="IPR027417">
    <property type="entry name" value="P-loop_NTPase"/>
</dbReference>
<dbReference type="NCBIfam" id="TIGR00174">
    <property type="entry name" value="miaA"/>
    <property type="match status" value="1"/>
</dbReference>
<dbReference type="PANTHER" id="PTHR11088">
    <property type="entry name" value="TRNA DIMETHYLALLYLTRANSFERASE"/>
    <property type="match status" value="1"/>
</dbReference>
<dbReference type="PANTHER" id="PTHR11088:SF60">
    <property type="entry name" value="TRNA DIMETHYLALLYLTRANSFERASE"/>
    <property type="match status" value="1"/>
</dbReference>
<dbReference type="Pfam" id="PF01715">
    <property type="entry name" value="IPPT"/>
    <property type="match status" value="1"/>
</dbReference>
<dbReference type="SUPFAM" id="SSF52540">
    <property type="entry name" value="P-loop containing nucleoside triphosphate hydrolases"/>
    <property type="match status" value="1"/>
</dbReference>